<proteinExistence type="inferred from homology"/>
<protein>
    <recommendedName>
        <fullName>Uncharacterized protein YdiY</fullName>
    </recommendedName>
</protein>
<name>YDIY_ECOLI</name>
<keyword id="KW-1185">Reference proteome</keyword>
<keyword id="KW-0732">Signal</keyword>
<dbReference type="EMBL" id="U00096">
    <property type="protein sequence ID" value="AAC74792.1"/>
    <property type="molecule type" value="Genomic_DNA"/>
</dbReference>
<dbReference type="EMBL" id="AP009048">
    <property type="protein sequence ID" value="BAE76508.1"/>
    <property type="molecule type" value="Genomic_DNA"/>
</dbReference>
<dbReference type="PIR" id="B64931">
    <property type="entry name" value="B64931"/>
</dbReference>
<dbReference type="RefSeq" id="NP_416236.1">
    <property type="nucleotide sequence ID" value="NC_000913.3"/>
</dbReference>
<dbReference type="RefSeq" id="WP_000771391.1">
    <property type="nucleotide sequence ID" value="NZ_SSZK01000001.1"/>
</dbReference>
<dbReference type="BioGRID" id="4261463">
    <property type="interactions" value="151"/>
</dbReference>
<dbReference type="FunCoup" id="P76206">
    <property type="interactions" value="23"/>
</dbReference>
<dbReference type="STRING" id="511145.b1722"/>
<dbReference type="TCDB" id="1.B.75.1.3">
    <property type="family name" value="the duf481 putative beta barrel porin (duf481) family"/>
</dbReference>
<dbReference type="PaxDb" id="511145-b1722"/>
<dbReference type="EnsemblBacteria" id="AAC74792">
    <property type="protein sequence ID" value="AAC74792"/>
    <property type="gene ID" value="b1722"/>
</dbReference>
<dbReference type="GeneID" id="946218"/>
<dbReference type="KEGG" id="ecj:JW1711"/>
<dbReference type="KEGG" id="eco:b1722"/>
<dbReference type="KEGG" id="ecoc:C3026_09850"/>
<dbReference type="PATRIC" id="fig|1411691.4.peg.534"/>
<dbReference type="EchoBASE" id="EB3740"/>
<dbReference type="eggNOG" id="COG3137">
    <property type="taxonomic scope" value="Bacteria"/>
</dbReference>
<dbReference type="HOGENOM" id="CLU_058997_2_0_6"/>
<dbReference type="InParanoid" id="P76206"/>
<dbReference type="OMA" id="NWENQYL"/>
<dbReference type="OrthoDB" id="5292716at2"/>
<dbReference type="PhylomeDB" id="P76206"/>
<dbReference type="BioCyc" id="EcoCyc:G6928-MONOMER"/>
<dbReference type="PRO" id="PR:P76206"/>
<dbReference type="Proteomes" id="UP000000625">
    <property type="component" value="Chromosome"/>
</dbReference>
<dbReference type="GO" id="GO:0009279">
    <property type="term" value="C:cell outer membrane"/>
    <property type="evidence" value="ECO:0007005"/>
    <property type="project" value="EcoCyc"/>
</dbReference>
<dbReference type="InterPro" id="IPR007433">
    <property type="entry name" value="DUF481"/>
</dbReference>
<dbReference type="Pfam" id="PF04338">
    <property type="entry name" value="DUF481"/>
    <property type="match status" value="1"/>
</dbReference>
<reference key="1">
    <citation type="journal article" date="1997" name="Science">
        <title>The complete genome sequence of Escherichia coli K-12.</title>
        <authorList>
            <person name="Blattner F.R."/>
            <person name="Plunkett G. III"/>
            <person name="Bloch C.A."/>
            <person name="Perna N.T."/>
            <person name="Burland V."/>
            <person name="Riley M."/>
            <person name="Collado-Vides J."/>
            <person name="Glasner J.D."/>
            <person name="Rode C.K."/>
            <person name="Mayhew G.F."/>
            <person name="Gregor J."/>
            <person name="Davis N.W."/>
            <person name="Kirkpatrick H.A."/>
            <person name="Goeden M.A."/>
            <person name="Rose D.J."/>
            <person name="Mau B."/>
            <person name="Shao Y."/>
        </authorList>
    </citation>
    <scope>NUCLEOTIDE SEQUENCE [LARGE SCALE GENOMIC DNA]</scope>
    <source>
        <strain>K12 / MG1655 / ATCC 47076</strain>
    </source>
</reference>
<reference key="2">
    <citation type="journal article" date="2006" name="Mol. Syst. Biol.">
        <title>Highly accurate genome sequences of Escherichia coli K-12 strains MG1655 and W3110.</title>
        <authorList>
            <person name="Hayashi K."/>
            <person name="Morooka N."/>
            <person name="Yamamoto Y."/>
            <person name="Fujita K."/>
            <person name="Isono K."/>
            <person name="Choi S."/>
            <person name="Ohtsubo E."/>
            <person name="Baba T."/>
            <person name="Wanner B.L."/>
            <person name="Mori H."/>
            <person name="Horiuchi T."/>
        </authorList>
    </citation>
    <scope>NUCLEOTIDE SEQUENCE [LARGE SCALE GENOMIC DNA]</scope>
    <source>
        <strain>K12 / W3110 / ATCC 27325 / DSM 5911</strain>
    </source>
</reference>
<accession>P76206</accession>
<accession>Q2MB48</accession>
<evidence type="ECO:0000255" key="1"/>
<evidence type="ECO:0000256" key="2">
    <source>
        <dbReference type="SAM" id="MobiDB-lite"/>
    </source>
</evidence>
<feature type="signal peptide" evidence="1">
    <location>
        <begin position="1"/>
        <end position="23"/>
    </location>
</feature>
<feature type="chain" id="PRO_0000013856" description="Uncharacterized protein YdiY">
    <location>
        <begin position="24"/>
        <end position="252"/>
    </location>
</feature>
<feature type="region of interest" description="Disordered" evidence="2">
    <location>
        <begin position="231"/>
        <end position="252"/>
    </location>
</feature>
<organism>
    <name type="scientific">Escherichia coli (strain K12)</name>
    <dbReference type="NCBI Taxonomy" id="83333"/>
    <lineage>
        <taxon>Bacteria</taxon>
        <taxon>Pseudomonadati</taxon>
        <taxon>Pseudomonadota</taxon>
        <taxon>Gammaproteobacteria</taxon>
        <taxon>Enterobacterales</taxon>
        <taxon>Enterobacteriaceae</taxon>
        <taxon>Escherichia</taxon>
    </lineage>
</organism>
<sequence length="252" mass="27607">MKLLKTVPAIVMLAGGMFASLNAAADDSVFTVMDDPASAKKPFEGNLNAGYLAQSGNTKSSSLTADTTMTWYGHTTAWSLWGNASNTSSNDERSSEKYAAGGRSRFNLTDYDYLFGQASWLTDRYNGYRERDVLTAGYGRQFLNGPVHSFRFEFGPGVRYDKYTDNASETQPLGYASGAYAWQLTDNAKFTQGVSVFGAEDTTLNSESALNVAINEHFGLKVAYNVTWNSEPPESAPEHTDRRTTLSLGYSM</sequence>
<gene>
    <name type="primary">ydiY</name>
    <name type="ordered locus">b1722</name>
    <name type="ordered locus">JW1711</name>
</gene>